<feature type="chain" id="PRO_0000236525" description="Large ribosomal subunit protein bL9">
    <location>
        <begin position="1"/>
        <end position="149"/>
    </location>
</feature>
<protein>
    <recommendedName>
        <fullName evidence="1">Large ribosomal subunit protein bL9</fullName>
    </recommendedName>
    <alternativeName>
        <fullName evidence="2">50S ribosomal protein L9</fullName>
    </alternativeName>
</protein>
<comment type="function">
    <text evidence="1">Binds to the 23S rRNA.</text>
</comment>
<comment type="similarity">
    <text evidence="1">Belongs to the bacterial ribosomal protein bL9 family.</text>
</comment>
<proteinExistence type="inferred from homology"/>
<name>RL9_GEOKA</name>
<organism>
    <name type="scientific">Geobacillus kaustophilus (strain HTA426)</name>
    <dbReference type="NCBI Taxonomy" id="235909"/>
    <lineage>
        <taxon>Bacteria</taxon>
        <taxon>Bacillati</taxon>
        <taxon>Bacillota</taxon>
        <taxon>Bacilli</taxon>
        <taxon>Bacillales</taxon>
        <taxon>Anoxybacillaceae</taxon>
        <taxon>Geobacillus</taxon>
        <taxon>Geobacillus thermoleovorans group</taxon>
    </lineage>
</organism>
<sequence length="149" mass="16368">MKVIFLKDVKGKGKKGEIKDVADGYANNFLFKQGLAIEATPANIKALEAQKQKEQRQAAEELANAKKLKEELEKLTVEIPAKAGEGGRLFGSITSKQIAEALQAQHGLKLDKRKIELADAIRSLGYTNVPVKLHPEVTATLKVHVKEQK</sequence>
<dbReference type="EMBL" id="BA000043">
    <property type="protein sequence ID" value="BAD77762.1"/>
    <property type="molecule type" value="Genomic_DNA"/>
</dbReference>
<dbReference type="RefSeq" id="WP_011232941.1">
    <property type="nucleotide sequence ID" value="NC_006510.1"/>
</dbReference>
<dbReference type="SMR" id="Q5KU74"/>
<dbReference type="STRING" id="235909.GK3477"/>
<dbReference type="GeneID" id="32065354"/>
<dbReference type="KEGG" id="gka:GK3477"/>
<dbReference type="eggNOG" id="COG0359">
    <property type="taxonomic scope" value="Bacteria"/>
</dbReference>
<dbReference type="HOGENOM" id="CLU_078938_3_2_9"/>
<dbReference type="Proteomes" id="UP000001172">
    <property type="component" value="Chromosome"/>
</dbReference>
<dbReference type="GO" id="GO:1990904">
    <property type="term" value="C:ribonucleoprotein complex"/>
    <property type="evidence" value="ECO:0007669"/>
    <property type="project" value="UniProtKB-KW"/>
</dbReference>
<dbReference type="GO" id="GO:0005840">
    <property type="term" value="C:ribosome"/>
    <property type="evidence" value="ECO:0007669"/>
    <property type="project" value="UniProtKB-KW"/>
</dbReference>
<dbReference type="GO" id="GO:0019843">
    <property type="term" value="F:rRNA binding"/>
    <property type="evidence" value="ECO:0007669"/>
    <property type="project" value="UniProtKB-UniRule"/>
</dbReference>
<dbReference type="GO" id="GO:0003735">
    <property type="term" value="F:structural constituent of ribosome"/>
    <property type="evidence" value="ECO:0007669"/>
    <property type="project" value="InterPro"/>
</dbReference>
<dbReference type="GO" id="GO:0006412">
    <property type="term" value="P:translation"/>
    <property type="evidence" value="ECO:0007669"/>
    <property type="project" value="UniProtKB-UniRule"/>
</dbReference>
<dbReference type="FunFam" id="3.10.430.100:FF:000002">
    <property type="entry name" value="50S ribosomal protein L9"/>
    <property type="match status" value="1"/>
</dbReference>
<dbReference type="FunFam" id="3.40.5.10:FF:000002">
    <property type="entry name" value="50S ribosomal protein L9"/>
    <property type="match status" value="1"/>
</dbReference>
<dbReference type="Gene3D" id="3.10.430.100">
    <property type="entry name" value="Ribosomal protein L9, C-terminal domain"/>
    <property type="match status" value="1"/>
</dbReference>
<dbReference type="Gene3D" id="3.40.5.10">
    <property type="entry name" value="Ribosomal protein L9, N-terminal domain"/>
    <property type="match status" value="1"/>
</dbReference>
<dbReference type="HAMAP" id="MF_00503">
    <property type="entry name" value="Ribosomal_bL9"/>
    <property type="match status" value="1"/>
</dbReference>
<dbReference type="InterPro" id="IPR000244">
    <property type="entry name" value="Ribosomal_bL9"/>
</dbReference>
<dbReference type="InterPro" id="IPR009027">
    <property type="entry name" value="Ribosomal_bL9/RNase_H1_N"/>
</dbReference>
<dbReference type="InterPro" id="IPR020594">
    <property type="entry name" value="Ribosomal_bL9_bac/chp"/>
</dbReference>
<dbReference type="InterPro" id="IPR020069">
    <property type="entry name" value="Ribosomal_bL9_C"/>
</dbReference>
<dbReference type="InterPro" id="IPR036791">
    <property type="entry name" value="Ribosomal_bL9_C_sf"/>
</dbReference>
<dbReference type="InterPro" id="IPR020070">
    <property type="entry name" value="Ribosomal_bL9_N"/>
</dbReference>
<dbReference type="InterPro" id="IPR036935">
    <property type="entry name" value="Ribosomal_bL9_N_sf"/>
</dbReference>
<dbReference type="NCBIfam" id="TIGR00158">
    <property type="entry name" value="L9"/>
    <property type="match status" value="1"/>
</dbReference>
<dbReference type="PANTHER" id="PTHR21368">
    <property type="entry name" value="50S RIBOSOMAL PROTEIN L9"/>
    <property type="match status" value="1"/>
</dbReference>
<dbReference type="Pfam" id="PF03948">
    <property type="entry name" value="Ribosomal_L9_C"/>
    <property type="match status" value="1"/>
</dbReference>
<dbReference type="Pfam" id="PF01281">
    <property type="entry name" value="Ribosomal_L9_N"/>
    <property type="match status" value="1"/>
</dbReference>
<dbReference type="SUPFAM" id="SSF55658">
    <property type="entry name" value="L9 N-domain-like"/>
    <property type="match status" value="1"/>
</dbReference>
<dbReference type="SUPFAM" id="SSF55653">
    <property type="entry name" value="Ribosomal protein L9 C-domain"/>
    <property type="match status" value="1"/>
</dbReference>
<dbReference type="PROSITE" id="PS00651">
    <property type="entry name" value="RIBOSOMAL_L9"/>
    <property type="match status" value="1"/>
</dbReference>
<accession>Q5KU74</accession>
<reference key="1">
    <citation type="journal article" date="2004" name="Nucleic Acids Res.">
        <title>Thermoadaptation trait revealed by the genome sequence of thermophilic Geobacillus kaustophilus.</title>
        <authorList>
            <person name="Takami H."/>
            <person name="Takaki Y."/>
            <person name="Chee G.-J."/>
            <person name="Nishi S."/>
            <person name="Shimamura S."/>
            <person name="Suzuki H."/>
            <person name="Matsui S."/>
            <person name="Uchiyama I."/>
        </authorList>
    </citation>
    <scope>NUCLEOTIDE SEQUENCE [LARGE SCALE GENOMIC DNA]</scope>
    <source>
        <strain>HTA426</strain>
    </source>
</reference>
<gene>
    <name evidence="1" type="primary">rplI</name>
    <name type="ordered locus">GK3477</name>
</gene>
<evidence type="ECO:0000255" key="1">
    <source>
        <dbReference type="HAMAP-Rule" id="MF_00503"/>
    </source>
</evidence>
<evidence type="ECO:0000305" key="2"/>
<keyword id="KW-1185">Reference proteome</keyword>
<keyword id="KW-0687">Ribonucleoprotein</keyword>
<keyword id="KW-0689">Ribosomal protein</keyword>
<keyword id="KW-0694">RNA-binding</keyword>
<keyword id="KW-0699">rRNA-binding</keyword>